<evidence type="ECO:0000255" key="1">
    <source>
        <dbReference type="HAMAP-Rule" id="MF_01389"/>
    </source>
</evidence>
<feature type="chain" id="PRO_0000347416" description="Urease accessory protein UreG">
    <location>
        <begin position="1"/>
        <end position="203"/>
    </location>
</feature>
<feature type="binding site" evidence="1">
    <location>
        <begin position="11"/>
        <end position="18"/>
    </location>
    <ligand>
        <name>GTP</name>
        <dbReference type="ChEBI" id="CHEBI:37565"/>
    </ligand>
</feature>
<sequence>MSSKLRVGVAGPVGSGKTALLETLCLSLKKNYEIAVVTNDIYTKEDANFLINKKVLEEGRIIGVETGGCPHTAIREDCSLNKNAVLDLENKYNPLDFVFVESGGDNLASSFSPELVDLSIYVIDVSAGDKIPRKGGPGITRSDLLLINKIDLADMVGADLNIMKSDTEFMRKGKPWFFTNLSIGKGVKEISQFLESHLPNNQN</sequence>
<proteinExistence type="inferred from homology"/>
<name>UREG_PROM2</name>
<gene>
    <name evidence="1" type="primary">ureG</name>
    <name type="ordered locus">P9215_09191</name>
</gene>
<organism>
    <name type="scientific">Prochlorococcus marinus (strain MIT 9215)</name>
    <dbReference type="NCBI Taxonomy" id="93060"/>
    <lineage>
        <taxon>Bacteria</taxon>
        <taxon>Bacillati</taxon>
        <taxon>Cyanobacteriota</taxon>
        <taxon>Cyanophyceae</taxon>
        <taxon>Synechococcales</taxon>
        <taxon>Prochlorococcaceae</taxon>
        <taxon>Prochlorococcus</taxon>
    </lineage>
</organism>
<reference key="1">
    <citation type="journal article" date="2007" name="PLoS Genet.">
        <title>Patterns and implications of gene gain and loss in the evolution of Prochlorococcus.</title>
        <authorList>
            <person name="Kettler G.C."/>
            <person name="Martiny A.C."/>
            <person name="Huang K."/>
            <person name="Zucker J."/>
            <person name="Coleman M.L."/>
            <person name="Rodrigue S."/>
            <person name="Chen F."/>
            <person name="Lapidus A."/>
            <person name="Ferriera S."/>
            <person name="Johnson J."/>
            <person name="Steglich C."/>
            <person name="Church G.M."/>
            <person name="Richardson P."/>
            <person name="Chisholm S.W."/>
        </authorList>
    </citation>
    <scope>NUCLEOTIDE SEQUENCE [LARGE SCALE GENOMIC DNA]</scope>
    <source>
        <strain>MIT 9215</strain>
    </source>
</reference>
<comment type="function">
    <text evidence="1">Facilitates the functional incorporation of the urease nickel metallocenter. This process requires GTP hydrolysis, probably effectuated by UreG.</text>
</comment>
<comment type="subunit">
    <text evidence="1">Homodimer. UreD, UreF and UreG form a complex that acts as a GTP-hydrolysis-dependent molecular chaperone, activating the urease apoprotein by helping to assemble the nickel containing metallocenter of UreC. The UreE protein probably delivers the nickel.</text>
</comment>
<comment type="subcellular location">
    <subcellularLocation>
        <location evidence="1">Cytoplasm</location>
    </subcellularLocation>
</comment>
<comment type="similarity">
    <text evidence="1">Belongs to the SIMIBI class G3E GTPase family. UreG subfamily.</text>
</comment>
<protein>
    <recommendedName>
        <fullName evidence="1">Urease accessory protein UreG</fullName>
    </recommendedName>
</protein>
<accession>A8G4K3</accession>
<keyword id="KW-0143">Chaperone</keyword>
<keyword id="KW-0963">Cytoplasm</keyword>
<keyword id="KW-0342">GTP-binding</keyword>
<keyword id="KW-0996">Nickel insertion</keyword>
<keyword id="KW-0547">Nucleotide-binding</keyword>
<dbReference type="EMBL" id="CP000825">
    <property type="protein sequence ID" value="ABV50534.1"/>
    <property type="molecule type" value="Genomic_DNA"/>
</dbReference>
<dbReference type="RefSeq" id="WP_012007630.1">
    <property type="nucleotide sequence ID" value="NC_009840.1"/>
</dbReference>
<dbReference type="SMR" id="A8G4K3"/>
<dbReference type="STRING" id="93060.P9215_09191"/>
<dbReference type="KEGG" id="pmh:P9215_09191"/>
<dbReference type="eggNOG" id="COG0378">
    <property type="taxonomic scope" value="Bacteria"/>
</dbReference>
<dbReference type="HOGENOM" id="CLU_072144_1_0_3"/>
<dbReference type="OrthoDB" id="9802035at2"/>
<dbReference type="Proteomes" id="UP000002014">
    <property type="component" value="Chromosome"/>
</dbReference>
<dbReference type="GO" id="GO:0005737">
    <property type="term" value="C:cytoplasm"/>
    <property type="evidence" value="ECO:0007669"/>
    <property type="project" value="UniProtKB-SubCell"/>
</dbReference>
<dbReference type="GO" id="GO:0005525">
    <property type="term" value="F:GTP binding"/>
    <property type="evidence" value="ECO:0007669"/>
    <property type="project" value="UniProtKB-KW"/>
</dbReference>
<dbReference type="GO" id="GO:0003924">
    <property type="term" value="F:GTPase activity"/>
    <property type="evidence" value="ECO:0007669"/>
    <property type="project" value="InterPro"/>
</dbReference>
<dbReference type="GO" id="GO:0016151">
    <property type="term" value="F:nickel cation binding"/>
    <property type="evidence" value="ECO:0007669"/>
    <property type="project" value="UniProtKB-UniRule"/>
</dbReference>
<dbReference type="GO" id="GO:0043419">
    <property type="term" value="P:urea catabolic process"/>
    <property type="evidence" value="ECO:0007669"/>
    <property type="project" value="InterPro"/>
</dbReference>
<dbReference type="CDD" id="cd05540">
    <property type="entry name" value="UreG"/>
    <property type="match status" value="1"/>
</dbReference>
<dbReference type="Gene3D" id="3.40.50.300">
    <property type="entry name" value="P-loop containing nucleotide triphosphate hydrolases"/>
    <property type="match status" value="1"/>
</dbReference>
<dbReference type="HAMAP" id="MF_01389">
    <property type="entry name" value="UreG"/>
    <property type="match status" value="1"/>
</dbReference>
<dbReference type="InterPro" id="IPR003495">
    <property type="entry name" value="CobW/HypB/UreG_nucleotide-bd"/>
</dbReference>
<dbReference type="InterPro" id="IPR027417">
    <property type="entry name" value="P-loop_NTPase"/>
</dbReference>
<dbReference type="InterPro" id="IPR004400">
    <property type="entry name" value="UreG"/>
</dbReference>
<dbReference type="NCBIfam" id="TIGR00101">
    <property type="entry name" value="ureG"/>
    <property type="match status" value="1"/>
</dbReference>
<dbReference type="PANTHER" id="PTHR31715">
    <property type="entry name" value="UREASE ACCESSORY PROTEIN G"/>
    <property type="match status" value="1"/>
</dbReference>
<dbReference type="PANTHER" id="PTHR31715:SF0">
    <property type="entry name" value="UREASE ACCESSORY PROTEIN G"/>
    <property type="match status" value="1"/>
</dbReference>
<dbReference type="Pfam" id="PF02492">
    <property type="entry name" value="cobW"/>
    <property type="match status" value="1"/>
</dbReference>
<dbReference type="PIRSF" id="PIRSF005624">
    <property type="entry name" value="Ni-bind_GTPase"/>
    <property type="match status" value="1"/>
</dbReference>
<dbReference type="SUPFAM" id="SSF52540">
    <property type="entry name" value="P-loop containing nucleoside triphosphate hydrolases"/>
    <property type="match status" value="1"/>
</dbReference>